<evidence type="ECO:0000255" key="1">
    <source>
        <dbReference type="HAMAP-Rule" id="MF_01306"/>
    </source>
</evidence>
<evidence type="ECO:0000305" key="2"/>
<feature type="chain" id="PRO_0000322268" description="Small ribosomal subunit protein uS4">
    <location>
        <begin position="1"/>
        <end position="201"/>
    </location>
</feature>
<feature type="domain" description="S4 RNA-binding" evidence="1">
    <location>
        <begin position="92"/>
        <end position="155"/>
    </location>
</feature>
<accession>A6KYH1</accession>
<gene>
    <name evidence="1" type="primary">rpsD</name>
    <name type="ordered locus">BVU_0781</name>
</gene>
<comment type="function">
    <text evidence="1">One of the primary rRNA binding proteins, it binds directly to 16S rRNA where it nucleates assembly of the body of the 30S subunit.</text>
</comment>
<comment type="function">
    <text evidence="1">With S5 and S12 plays an important role in translational accuracy.</text>
</comment>
<comment type="subunit">
    <text evidence="1">Part of the 30S ribosomal subunit. Contacts protein S5. The interaction surface between S4 and S5 is involved in control of translational fidelity.</text>
</comment>
<comment type="similarity">
    <text evidence="1">Belongs to the universal ribosomal protein uS4 family.</text>
</comment>
<organism>
    <name type="scientific">Phocaeicola vulgatus (strain ATCC 8482 / DSM 1447 / JCM 5826 / CCUG 4940 / NBRC 14291 / NCTC 11154)</name>
    <name type="common">Bacteroides vulgatus</name>
    <dbReference type="NCBI Taxonomy" id="435590"/>
    <lineage>
        <taxon>Bacteria</taxon>
        <taxon>Pseudomonadati</taxon>
        <taxon>Bacteroidota</taxon>
        <taxon>Bacteroidia</taxon>
        <taxon>Bacteroidales</taxon>
        <taxon>Bacteroidaceae</taxon>
        <taxon>Phocaeicola</taxon>
    </lineage>
</organism>
<keyword id="KW-0687">Ribonucleoprotein</keyword>
<keyword id="KW-0689">Ribosomal protein</keyword>
<keyword id="KW-0694">RNA-binding</keyword>
<keyword id="KW-0699">rRNA-binding</keyword>
<proteinExistence type="inferred from homology"/>
<sequence>MARYTGPKSRIARKFGEGIFGADKVLSKKNYPPGQHGNNRRRKTSEYGVMLAEKQKAKYTYGVLEKQFRNLFEKAASANGITGEILLQSLEARLDNVVFRLGIAPTRAAARQLVSHKHITVDGKVVNIPSFSVKPGQIVGVRERSKSLEVIANSLAGFNHSKYPWLEWDESSKVGKLLHIPERADIPENIKEHLIVELYSK</sequence>
<name>RS4_PHOV8</name>
<reference key="1">
    <citation type="journal article" date="2007" name="PLoS Biol.">
        <title>Evolution of symbiotic bacteria in the distal human intestine.</title>
        <authorList>
            <person name="Xu J."/>
            <person name="Mahowald M.A."/>
            <person name="Ley R.E."/>
            <person name="Lozupone C.A."/>
            <person name="Hamady M."/>
            <person name="Martens E.C."/>
            <person name="Henrissat B."/>
            <person name="Coutinho P.M."/>
            <person name="Minx P."/>
            <person name="Latreille P."/>
            <person name="Cordum H."/>
            <person name="Van Brunt A."/>
            <person name="Kim K."/>
            <person name="Fulton R.S."/>
            <person name="Fulton L.A."/>
            <person name="Clifton S.W."/>
            <person name="Wilson R.K."/>
            <person name="Knight R.D."/>
            <person name="Gordon J.I."/>
        </authorList>
    </citation>
    <scope>NUCLEOTIDE SEQUENCE [LARGE SCALE GENOMIC DNA]</scope>
    <source>
        <strain>ATCC 8482 / DSM 1447 / JCM 5826 / CCUG 4940 / NBRC 14291 / NCTC 11154</strain>
    </source>
</reference>
<protein>
    <recommendedName>
        <fullName evidence="1">Small ribosomal subunit protein uS4</fullName>
    </recommendedName>
    <alternativeName>
        <fullName evidence="2">30S ribosomal protein S4</fullName>
    </alternativeName>
</protein>
<dbReference type="EMBL" id="CP000139">
    <property type="protein sequence ID" value="ABR38485.1"/>
    <property type="molecule type" value="Genomic_DNA"/>
</dbReference>
<dbReference type="RefSeq" id="WP_005844899.1">
    <property type="nucleotide sequence ID" value="NZ_JANSWM010000035.1"/>
</dbReference>
<dbReference type="SMR" id="A6KYH1"/>
<dbReference type="STRING" id="435590.BVU_0781"/>
<dbReference type="PaxDb" id="435590-BVU_0781"/>
<dbReference type="GeneID" id="93448997"/>
<dbReference type="KEGG" id="bvu:BVU_0781"/>
<dbReference type="eggNOG" id="COG0522">
    <property type="taxonomic scope" value="Bacteria"/>
</dbReference>
<dbReference type="HOGENOM" id="CLU_092403_0_2_10"/>
<dbReference type="BioCyc" id="BVUL435590:G1G59-821-MONOMER"/>
<dbReference type="Proteomes" id="UP000002861">
    <property type="component" value="Chromosome"/>
</dbReference>
<dbReference type="GO" id="GO:0015935">
    <property type="term" value="C:small ribosomal subunit"/>
    <property type="evidence" value="ECO:0007669"/>
    <property type="project" value="InterPro"/>
</dbReference>
<dbReference type="GO" id="GO:0019843">
    <property type="term" value="F:rRNA binding"/>
    <property type="evidence" value="ECO:0007669"/>
    <property type="project" value="UniProtKB-UniRule"/>
</dbReference>
<dbReference type="GO" id="GO:0003735">
    <property type="term" value="F:structural constituent of ribosome"/>
    <property type="evidence" value="ECO:0007669"/>
    <property type="project" value="InterPro"/>
</dbReference>
<dbReference type="GO" id="GO:0042274">
    <property type="term" value="P:ribosomal small subunit biogenesis"/>
    <property type="evidence" value="ECO:0007669"/>
    <property type="project" value="TreeGrafter"/>
</dbReference>
<dbReference type="GO" id="GO:0006412">
    <property type="term" value="P:translation"/>
    <property type="evidence" value="ECO:0007669"/>
    <property type="project" value="UniProtKB-UniRule"/>
</dbReference>
<dbReference type="CDD" id="cd00165">
    <property type="entry name" value="S4"/>
    <property type="match status" value="1"/>
</dbReference>
<dbReference type="FunFam" id="3.10.290.10:FF:000001">
    <property type="entry name" value="30S ribosomal protein S4"/>
    <property type="match status" value="1"/>
</dbReference>
<dbReference type="Gene3D" id="1.10.1050.10">
    <property type="entry name" value="Ribosomal Protein S4 Delta 41, Chain A, domain 1"/>
    <property type="match status" value="1"/>
</dbReference>
<dbReference type="Gene3D" id="3.10.290.10">
    <property type="entry name" value="RNA-binding S4 domain"/>
    <property type="match status" value="1"/>
</dbReference>
<dbReference type="HAMAP" id="MF_01306_B">
    <property type="entry name" value="Ribosomal_uS4_B"/>
    <property type="match status" value="1"/>
</dbReference>
<dbReference type="InterPro" id="IPR022801">
    <property type="entry name" value="Ribosomal_uS4"/>
</dbReference>
<dbReference type="InterPro" id="IPR005709">
    <property type="entry name" value="Ribosomal_uS4_bac-type"/>
</dbReference>
<dbReference type="InterPro" id="IPR018079">
    <property type="entry name" value="Ribosomal_uS4_CS"/>
</dbReference>
<dbReference type="InterPro" id="IPR001912">
    <property type="entry name" value="Ribosomal_uS4_N"/>
</dbReference>
<dbReference type="InterPro" id="IPR002942">
    <property type="entry name" value="S4_RNA-bd"/>
</dbReference>
<dbReference type="InterPro" id="IPR036986">
    <property type="entry name" value="S4_RNA-bd_sf"/>
</dbReference>
<dbReference type="NCBIfam" id="NF003717">
    <property type="entry name" value="PRK05327.1"/>
    <property type="match status" value="1"/>
</dbReference>
<dbReference type="NCBIfam" id="TIGR01017">
    <property type="entry name" value="rpsD_bact"/>
    <property type="match status" value="1"/>
</dbReference>
<dbReference type="PANTHER" id="PTHR11831">
    <property type="entry name" value="30S 40S RIBOSOMAL PROTEIN"/>
    <property type="match status" value="1"/>
</dbReference>
<dbReference type="PANTHER" id="PTHR11831:SF4">
    <property type="entry name" value="SMALL RIBOSOMAL SUBUNIT PROTEIN US4M"/>
    <property type="match status" value="1"/>
</dbReference>
<dbReference type="Pfam" id="PF00163">
    <property type="entry name" value="Ribosomal_S4"/>
    <property type="match status" value="1"/>
</dbReference>
<dbReference type="Pfam" id="PF01479">
    <property type="entry name" value="S4"/>
    <property type="match status" value="1"/>
</dbReference>
<dbReference type="SMART" id="SM01390">
    <property type="entry name" value="Ribosomal_S4"/>
    <property type="match status" value="1"/>
</dbReference>
<dbReference type="SMART" id="SM00363">
    <property type="entry name" value="S4"/>
    <property type="match status" value="1"/>
</dbReference>
<dbReference type="SUPFAM" id="SSF55174">
    <property type="entry name" value="Alpha-L RNA-binding motif"/>
    <property type="match status" value="1"/>
</dbReference>
<dbReference type="PROSITE" id="PS00632">
    <property type="entry name" value="RIBOSOMAL_S4"/>
    <property type="match status" value="1"/>
</dbReference>
<dbReference type="PROSITE" id="PS50889">
    <property type="entry name" value="S4"/>
    <property type="match status" value="1"/>
</dbReference>